<dbReference type="GO" id="GO:0005576">
    <property type="term" value="C:extracellular region"/>
    <property type="evidence" value="ECO:0007669"/>
    <property type="project" value="UniProtKB-KW"/>
</dbReference>
<comment type="subcellular location">
    <subcellularLocation>
        <location evidence="1">Secreted</location>
        <location evidence="1">Cell wall</location>
    </subcellularLocation>
</comment>
<feature type="chain" id="PRO_0000079644" description="24 kDa cell wall protein">
    <location>
        <begin position="1"/>
        <end position="15" status="greater than"/>
    </location>
</feature>
<feature type="non-terminal residue" evidence="2">
    <location>
        <position position="15"/>
    </location>
</feature>
<proteinExistence type="evidence at protein level"/>
<sequence>AHSDAVTPLPARSKV</sequence>
<name>CWP07_DAUCA</name>
<protein>
    <recommendedName>
        <fullName>24 kDa cell wall protein</fullName>
    </recommendedName>
</protein>
<accession>P80757</accession>
<reference evidence="3" key="1">
    <citation type="journal article" date="1997" name="J. Biol. Chem.">
        <title>Differential extraction and protein sequencing reveals major differences in patterns of primary cell wall proteins from plants.</title>
        <authorList>
            <person name="Robertson D."/>
            <person name="Mitchell G.P."/>
            <person name="Gilroy J.S."/>
            <person name="Gerrish C."/>
            <person name="Bolwell G.P."/>
            <person name="Slabas A.R."/>
        </authorList>
    </citation>
    <scope>PROTEIN SEQUENCE</scope>
    <scope>SUBCELLULAR LOCATION</scope>
</reference>
<organism>
    <name type="scientific">Daucus carota</name>
    <name type="common">Wild carrot</name>
    <dbReference type="NCBI Taxonomy" id="4039"/>
    <lineage>
        <taxon>Eukaryota</taxon>
        <taxon>Viridiplantae</taxon>
        <taxon>Streptophyta</taxon>
        <taxon>Embryophyta</taxon>
        <taxon>Tracheophyta</taxon>
        <taxon>Spermatophyta</taxon>
        <taxon>Magnoliopsida</taxon>
        <taxon>eudicotyledons</taxon>
        <taxon>Gunneridae</taxon>
        <taxon>Pentapetalae</taxon>
        <taxon>asterids</taxon>
        <taxon>campanulids</taxon>
        <taxon>Apiales</taxon>
        <taxon>Apiaceae</taxon>
        <taxon>Apioideae</taxon>
        <taxon>Scandiceae</taxon>
        <taxon>Daucinae</taxon>
        <taxon>Daucus</taxon>
        <taxon>Daucus sect. Daucus</taxon>
    </lineage>
</organism>
<keyword id="KW-0134">Cell wall</keyword>
<keyword id="KW-0903">Direct protein sequencing</keyword>
<keyword id="KW-0964">Secreted</keyword>
<evidence type="ECO:0000269" key="1">
    <source>
    </source>
</evidence>
<evidence type="ECO:0000303" key="2">
    <source>
    </source>
</evidence>
<evidence type="ECO:0000305" key="3"/>